<name>RNAS1_LAGLA</name>
<organism>
    <name type="scientific">Lagothrix lagotricha</name>
    <name type="common">Brown woolly monkey</name>
    <name type="synonym">Humboldt's woolly monkey</name>
    <dbReference type="NCBI Taxonomy" id="9519"/>
    <lineage>
        <taxon>Eukaryota</taxon>
        <taxon>Metazoa</taxon>
        <taxon>Chordata</taxon>
        <taxon>Craniata</taxon>
        <taxon>Vertebrata</taxon>
        <taxon>Euteleostomi</taxon>
        <taxon>Mammalia</taxon>
        <taxon>Eutheria</taxon>
        <taxon>Euarchontoglires</taxon>
        <taxon>Primates</taxon>
        <taxon>Haplorrhini</taxon>
        <taxon>Platyrrhini</taxon>
        <taxon>Atelidae</taxon>
        <taxon>Atelinae</taxon>
        <taxon>Lagothrix</taxon>
    </lineage>
</organism>
<evidence type="ECO:0000250" key="1"/>
<evidence type="ECO:0000255" key="2"/>
<evidence type="ECO:0000305" key="3"/>
<keyword id="KW-1015">Disulfide bond</keyword>
<keyword id="KW-0255">Endonuclease</keyword>
<keyword id="KW-0325">Glycoprotein</keyword>
<keyword id="KW-0378">Hydrolase</keyword>
<keyword id="KW-0456">Lyase</keyword>
<keyword id="KW-0540">Nuclease</keyword>
<keyword id="KW-0964">Secreted</keyword>
<keyword id="KW-0732">Signal</keyword>
<comment type="function">
    <text evidence="1">Endonuclease that catalyzes the cleavage of RNA on the 3' side of pyrimidine nucleotides. Acts on single-stranded and double-stranded RNA (By similarity).</text>
</comment>
<comment type="catalytic activity">
    <reaction>
        <text>an [RNA] containing cytidine + H2O = an [RNA]-3'-cytidine-3'-phosphate + a 5'-hydroxy-ribonucleotide-3'-[RNA].</text>
        <dbReference type="EC" id="4.6.1.18"/>
    </reaction>
</comment>
<comment type="catalytic activity">
    <reaction>
        <text>an [RNA] containing uridine + H2O = an [RNA]-3'-uridine-3'-phosphate + a 5'-hydroxy-ribonucleotide-3'-[RNA].</text>
        <dbReference type="EC" id="4.6.1.18"/>
    </reaction>
</comment>
<comment type="subunit">
    <text evidence="1">Monomer. Interacts with and forms tight 1:1 complexes with RNH1. Dimerization of two such complexes may occur. Interaction with RNH1 inhibits this protein (By similarity).</text>
</comment>
<comment type="subcellular location">
    <subcellularLocation>
        <location evidence="1">Secreted</location>
    </subcellularLocation>
</comment>
<comment type="similarity">
    <text evidence="3">Belongs to the pancreatic ribonuclease family.</text>
</comment>
<reference key="1">
    <citation type="journal article" date="2002" name="Nat. Genet.">
        <title>Adaptive evolution of a duplicated pancreatic ribonuclease gene in a leaf-eating monkey.</title>
        <authorList>
            <person name="Zhang J."/>
            <person name="Zhang Y.-P."/>
            <person name="Rosenberg H.F."/>
        </authorList>
    </citation>
    <scope>NUCLEOTIDE SEQUENCE [GENOMIC DNA]</scope>
</reference>
<sequence length="156" mass="17559">MALEKSLALLPLLVLVLLVLGWVQPSLGKESRAKKFQRQHMDSDGSLSSNPTYCNNMMRRRNMTQGWCKPVNTFVHEPLVDVQDVCFQENVTCKNGQANCYKSSSSMHITDCRLTSGSRYPNCAYQTSQKERHIIVACEGNPYVPVHFDASVEDST</sequence>
<protein>
    <recommendedName>
        <fullName>Ribonuclease pancreatic</fullName>
        <ecNumber>4.6.1.18</ecNumber>
    </recommendedName>
    <alternativeName>
        <fullName>RNase 1</fullName>
    </alternativeName>
    <alternativeName>
        <fullName>RNase A</fullName>
    </alternativeName>
</protein>
<dbReference type="EC" id="4.6.1.18"/>
<dbReference type="EMBL" id="AF449640">
    <property type="protein sequence ID" value="AAL87061.1"/>
    <property type="molecule type" value="Genomic_DNA"/>
</dbReference>
<dbReference type="SMR" id="Q8SQ05"/>
<dbReference type="GlyCosmos" id="Q8SQ05">
    <property type="glycosylation" value="2 sites, No reported glycans"/>
</dbReference>
<dbReference type="GO" id="GO:0005576">
    <property type="term" value="C:extracellular region"/>
    <property type="evidence" value="ECO:0007669"/>
    <property type="project" value="UniProtKB-SubCell"/>
</dbReference>
<dbReference type="GO" id="GO:0016829">
    <property type="term" value="F:lyase activity"/>
    <property type="evidence" value="ECO:0007669"/>
    <property type="project" value="UniProtKB-KW"/>
</dbReference>
<dbReference type="GO" id="GO:0003676">
    <property type="term" value="F:nucleic acid binding"/>
    <property type="evidence" value="ECO:0007669"/>
    <property type="project" value="InterPro"/>
</dbReference>
<dbReference type="GO" id="GO:0004522">
    <property type="term" value="F:ribonuclease A activity"/>
    <property type="evidence" value="ECO:0007669"/>
    <property type="project" value="UniProtKB-EC"/>
</dbReference>
<dbReference type="GO" id="GO:0050830">
    <property type="term" value="P:defense response to Gram-positive bacterium"/>
    <property type="evidence" value="ECO:0007669"/>
    <property type="project" value="TreeGrafter"/>
</dbReference>
<dbReference type="CDD" id="cd06265">
    <property type="entry name" value="RNase_A_canonical"/>
    <property type="match status" value="1"/>
</dbReference>
<dbReference type="FunFam" id="3.10.130.10:FF:000001">
    <property type="entry name" value="Ribonuclease pancreatic"/>
    <property type="match status" value="1"/>
</dbReference>
<dbReference type="Gene3D" id="3.10.130.10">
    <property type="entry name" value="Ribonuclease A-like domain"/>
    <property type="match status" value="1"/>
</dbReference>
<dbReference type="InterPro" id="IPR001427">
    <property type="entry name" value="RNaseA"/>
</dbReference>
<dbReference type="InterPro" id="IPR036816">
    <property type="entry name" value="RNaseA-like_dom_sf"/>
</dbReference>
<dbReference type="InterPro" id="IPR023411">
    <property type="entry name" value="RNaseA_AS"/>
</dbReference>
<dbReference type="InterPro" id="IPR023412">
    <property type="entry name" value="RNaseA_domain"/>
</dbReference>
<dbReference type="PANTHER" id="PTHR11437">
    <property type="entry name" value="RIBONUCLEASE"/>
    <property type="match status" value="1"/>
</dbReference>
<dbReference type="PANTHER" id="PTHR11437:SF24">
    <property type="entry name" value="RIBONUCLEASE PANCREATIC"/>
    <property type="match status" value="1"/>
</dbReference>
<dbReference type="Pfam" id="PF00074">
    <property type="entry name" value="RnaseA"/>
    <property type="match status" value="1"/>
</dbReference>
<dbReference type="PRINTS" id="PR00794">
    <property type="entry name" value="RIBONUCLEASE"/>
</dbReference>
<dbReference type="SMART" id="SM00092">
    <property type="entry name" value="RNAse_Pc"/>
    <property type="match status" value="1"/>
</dbReference>
<dbReference type="SUPFAM" id="SSF54076">
    <property type="entry name" value="RNase A-like"/>
    <property type="match status" value="1"/>
</dbReference>
<dbReference type="PROSITE" id="PS00127">
    <property type="entry name" value="RNASE_PANCREATIC"/>
    <property type="match status" value="1"/>
</dbReference>
<proteinExistence type="inferred from homology"/>
<accession>Q8SQ05</accession>
<feature type="signal peptide" evidence="1">
    <location>
        <begin position="1"/>
        <end position="28"/>
    </location>
</feature>
<feature type="chain" id="PRO_0000030923" description="Ribonuclease pancreatic">
    <location>
        <begin position="29"/>
        <end position="156"/>
    </location>
</feature>
<feature type="active site" description="Proton acceptor" evidence="1">
    <location>
        <position position="40"/>
    </location>
</feature>
<feature type="active site" description="Proton donor" evidence="1">
    <location>
        <position position="147"/>
    </location>
</feature>
<feature type="binding site" evidence="1">
    <location>
        <position position="35"/>
    </location>
    <ligand>
        <name>substrate</name>
    </ligand>
</feature>
<feature type="binding site" evidence="1">
    <location>
        <position position="38"/>
    </location>
    <ligand>
        <name>substrate</name>
    </ligand>
</feature>
<feature type="binding site" evidence="1">
    <location>
        <begin position="69"/>
        <end position="73"/>
    </location>
    <ligand>
        <name>substrate</name>
    </ligand>
</feature>
<feature type="binding site" evidence="1">
    <location>
        <position position="94"/>
    </location>
    <ligand>
        <name>substrate</name>
    </ligand>
</feature>
<feature type="binding site" evidence="1">
    <location>
        <position position="113"/>
    </location>
    <ligand>
        <name>substrate</name>
    </ligand>
</feature>
<feature type="glycosylation site" description="N-linked (GlcNAc...) asparagine" evidence="2">
    <location>
        <position position="62"/>
    </location>
</feature>
<feature type="glycosylation site" description="N-linked (GlcNAc...) asparagine" evidence="2">
    <location>
        <position position="90"/>
    </location>
</feature>
<feature type="disulfide bond" evidence="1">
    <location>
        <begin position="54"/>
        <end position="112"/>
    </location>
</feature>
<feature type="disulfide bond" evidence="1">
    <location>
        <begin position="68"/>
        <end position="123"/>
    </location>
</feature>
<feature type="disulfide bond" evidence="1">
    <location>
        <begin position="86"/>
        <end position="138"/>
    </location>
</feature>
<feature type="disulfide bond" evidence="1">
    <location>
        <begin position="93"/>
        <end position="100"/>
    </location>
</feature>
<gene>
    <name type="primary">RNASE1</name>
    <name type="synonym">RNS1</name>
</gene>